<organism>
    <name type="scientific">Desulfitobacterium hafniense (strain DSM 10664 / DCB-2)</name>
    <dbReference type="NCBI Taxonomy" id="272564"/>
    <lineage>
        <taxon>Bacteria</taxon>
        <taxon>Bacillati</taxon>
        <taxon>Bacillota</taxon>
        <taxon>Clostridia</taxon>
        <taxon>Eubacteriales</taxon>
        <taxon>Desulfitobacteriaceae</taxon>
        <taxon>Desulfitobacterium</taxon>
    </lineage>
</organism>
<accession>B8FUR7</accession>
<reference key="1">
    <citation type="journal article" date="2012" name="BMC Microbiol.">
        <title>Genome sequence of Desulfitobacterium hafniense DCB-2, a Gram-positive anaerobe capable of dehalogenation and metal reduction.</title>
        <authorList>
            <person name="Kim S.H."/>
            <person name="Harzman C."/>
            <person name="Davis J.K."/>
            <person name="Hutcheson R."/>
            <person name="Broderick J.B."/>
            <person name="Marsh T.L."/>
            <person name="Tiedje J.M."/>
        </authorList>
    </citation>
    <scope>NUCLEOTIDE SEQUENCE [LARGE SCALE GENOMIC DNA]</scope>
    <source>
        <strain>DSM 10664 / DCB-2</strain>
    </source>
</reference>
<feature type="chain" id="PRO_1000125349" description="Probable nicotinate-nucleotide adenylyltransferase">
    <location>
        <begin position="1"/>
        <end position="207"/>
    </location>
</feature>
<proteinExistence type="inferred from homology"/>
<protein>
    <recommendedName>
        <fullName evidence="1">Probable nicotinate-nucleotide adenylyltransferase</fullName>
        <ecNumber evidence="1">2.7.7.18</ecNumber>
    </recommendedName>
    <alternativeName>
        <fullName evidence="1">Deamido-NAD(+) diphosphorylase</fullName>
    </alternativeName>
    <alternativeName>
        <fullName evidence="1">Deamido-NAD(+) pyrophosphorylase</fullName>
    </alternativeName>
    <alternativeName>
        <fullName evidence="1">Nicotinate mononucleotide adenylyltransferase</fullName>
        <shortName evidence="1">NaMN adenylyltransferase</shortName>
    </alternativeName>
</protein>
<comment type="function">
    <text evidence="1">Catalyzes the reversible adenylation of nicotinate mononucleotide (NaMN) to nicotinic acid adenine dinucleotide (NaAD).</text>
</comment>
<comment type="catalytic activity">
    <reaction evidence="1">
        <text>nicotinate beta-D-ribonucleotide + ATP + H(+) = deamido-NAD(+) + diphosphate</text>
        <dbReference type="Rhea" id="RHEA:22860"/>
        <dbReference type="ChEBI" id="CHEBI:15378"/>
        <dbReference type="ChEBI" id="CHEBI:30616"/>
        <dbReference type="ChEBI" id="CHEBI:33019"/>
        <dbReference type="ChEBI" id="CHEBI:57502"/>
        <dbReference type="ChEBI" id="CHEBI:58437"/>
        <dbReference type="EC" id="2.7.7.18"/>
    </reaction>
</comment>
<comment type="pathway">
    <text evidence="1">Cofactor biosynthesis; NAD(+) biosynthesis; deamido-NAD(+) from nicotinate D-ribonucleotide: step 1/1.</text>
</comment>
<comment type="similarity">
    <text evidence="1">Belongs to the NadD family.</text>
</comment>
<keyword id="KW-0067">ATP-binding</keyword>
<keyword id="KW-0520">NAD</keyword>
<keyword id="KW-0547">Nucleotide-binding</keyword>
<keyword id="KW-0548">Nucleotidyltransferase</keyword>
<keyword id="KW-0662">Pyridine nucleotide biosynthesis</keyword>
<keyword id="KW-0808">Transferase</keyword>
<sequence>MNINAPPKRIGIMGGTFDPLHYGHLVAAEMARHEFALEKVIFIPTGNPPHKVGRRVTSSGDRYEMVKRAVQDNSFFEVSDLEIQRKGYSYTVDTLKDMHKLYPQHELYFITGADAFREIFTWREVQSVLSLSHFIGASRPGFDPHEFLEELKRDYPEFLPHMHLFDVPALAISSTDIRSRVKEGKPIRYLLPESVRLYIEETGLYRI</sequence>
<name>NADD_DESHD</name>
<dbReference type="EC" id="2.7.7.18" evidence="1"/>
<dbReference type="EMBL" id="CP001336">
    <property type="protein sequence ID" value="ACL22337.1"/>
    <property type="molecule type" value="Genomic_DNA"/>
</dbReference>
<dbReference type="RefSeq" id="WP_005816533.1">
    <property type="nucleotide sequence ID" value="NC_011830.1"/>
</dbReference>
<dbReference type="SMR" id="B8FUR7"/>
<dbReference type="KEGG" id="dhd:Dhaf_4332"/>
<dbReference type="HOGENOM" id="CLU_069765_1_1_9"/>
<dbReference type="UniPathway" id="UPA00253">
    <property type="reaction ID" value="UER00332"/>
</dbReference>
<dbReference type="Proteomes" id="UP000007726">
    <property type="component" value="Chromosome"/>
</dbReference>
<dbReference type="GO" id="GO:0005524">
    <property type="term" value="F:ATP binding"/>
    <property type="evidence" value="ECO:0007669"/>
    <property type="project" value="UniProtKB-KW"/>
</dbReference>
<dbReference type="GO" id="GO:0004515">
    <property type="term" value="F:nicotinate-nucleotide adenylyltransferase activity"/>
    <property type="evidence" value="ECO:0007669"/>
    <property type="project" value="UniProtKB-UniRule"/>
</dbReference>
<dbReference type="GO" id="GO:0009435">
    <property type="term" value="P:NAD biosynthetic process"/>
    <property type="evidence" value="ECO:0007669"/>
    <property type="project" value="UniProtKB-UniRule"/>
</dbReference>
<dbReference type="CDD" id="cd02165">
    <property type="entry name" value="NMNAT"/>
    <property type="match status" value="1"/>
</dbReference>
<dbReference type="Gene3D" id="3.40.50.620">
    <property type="entry name" value="HUPs"/>
    <property type="match status" value="1"/>
</dbReference>
<dbReference type="HAMAP" id="MF_00244">
    <property type="entry name" value="NaMN_adenylyltr"/>
    <property type="match status" value="1"/>
</dbReference>
<dbReference type="InterPro" id="IPR004821">
    <property type="entry name" value="Cyt_trans-like"/>
</dbReference>
<dbReference type="InterPro" id="IPR005248">
    <property type="entry name" value="NadD/NMNAT"/>
</dbReference>
<dbReference type="InterPro" id="IPR014729">
    <property type="entry name" value="Rossmann-like_a/b/a_fold"/>
</dbReference>
<dbReference type="NCBIfam" id="TIGR00125">
    <property type="entry name" value="cyt_tran_rel"/>
    <property type="match status" value="1"/>
</dbReference>
<dbReference type="NCBIfam" id="TIGR00482">
    <property type="entry name" value="nicotinate (nicotinamide) nucleotide adenylyltransferase"/>
    <property type="match status" value="1"/>
</dbReference>
<dbReference type="NCBIfam" id="NF000840">
    <property type="entry name" value="PRK00071.1-3"/>
    <property type="match status" value="1"/>
</dbReference>
<dbReference type="PANTHER" id="PTHR39321">
    <property type="entry name" value="NICOTINATE-NUCLEOTIDE ADENYLYLTRANSFERASE-RELATED"/>
    <property type="match status" value="1"/>
</dbReference>
<dbReference type="PANTHER" id="PTHR39321:SF3">
    <property type="entry name" value="PHOSPHOPANTETHEINE ADENYLYLTRANSFERASE"/>
    <property type="match status" value="1"/>
</dbReference>
<dbReference type="Pfam" id="PF01467">
    <property type="entry name" value="CTP_transf_like"/>
    <property type="match status" value="1"/>
</dbReference>
<dbReference type="SUPFAM" id="SSF52374">
    <property type="entry name" value="Nucleotidylyl transferase"/>
    <property type="match status" value="1"/>
</dbReference>
<gene>
    <name evidence="1" type="primary">nadD</name>
    <name type="ordered locus">Dhaf_4332</name>
</gene>
<evidence type="ECO:0000255" key="1">
    <source>
        <dbReference type="HAMAP-Rule" id="MF_00244"/>
    </source>
</evidence>